<evidence type="ECO:0000255" key="1">
    <source>
        <dbReference type="HAMAP-Rule" id="MF_00444"/>
    </source>
</evidence>
<reference key="1">
    <citation type="journal article" date="2006" name="Plant Cell Rep.">
        <title>The complete chloroplast genome sequences of Solanum tuberosum and comparative analysis with Solanaceae species identified the presence of a 241-bp deletion in cultivated potato chloroplast DNA sequence.</title>
        <authorList>
            <person name="Chung H.-J."/>
            <person name="Jung J.D."/>
            <person name="Park H.-W."/>
            <person name="Kim J.-H."/>
            <person name="Cha H.W."/>
            <person name="Min S.R."/>
            <person name="Jeong W.-J."/>
            <person name="Liu J.R."/>
        </authorList>
    </citation>
    <scope>NUCLEOTIDE SEQUENCE [LARGE SCALE GENOMIC DNA]</scope>
    <source>
        <strain>cv. Desiree</strain>
    </source>
</reference>
<reference key="2">
    <citation type="submission" date="2006-02" db="EMBL/GenBank/DDBJ databases">
        <title>Complete chloroplast genome sequences of Solanum tuberosum cultivar Desiree and comparative analyses with other Solanaceae genomes.</title>
        <authorList>
            <person name="Gargano D."/>
            <person name="Scotti N."/>
            <person name="Vezzi A."/>
            <person name="Bilardi A."/>
            <person name="Valle G."/>
            <person name="Grillo S."/>
            <person name="Cardi T."/>
        </authorList>
    </citation>
    <scope>NUCLEOTIDE SEQUENCE [LARGE SCALE GENOMIC DNA]</scope>
    <source>
        <strain>cv. Desiree</strain>
    </source>
</reference>
<accession>Q27S24</accession>
<protein>
    <recommendedName>
        <fullName evidence="1">ATP-dependent Clp protease proteolytic subunit</fullName>
        <ecNumber evidence="1">3.4.21.92</ecNumber>
    </recommendedName>
    <alternativeName>
        <fullName evidence="1">Endopeptidase Clp</fullName>
    </alternativeName>
</protein>
<comment type="function">
    <text evidence="1">Cleaves peptides in various proteins in a process that requires ATP hydrolysis. Has a chymotrypsin-like activity. Plays a major role in the degradation of misfolded proteins.</text>
</comment>
<comment type="catalytic activity">
    <reaction evidence="1">
        <text>Hydrolysis of proteins to small peptides in the presence of ATP and magnesium. alpha-casein is the usual test substrate. In the absence of ATP, only oligopeptides shorter than five residues are hydrolyzed (such as succinyl-Leu-Tyr-|-NHMec, and Leu-Tyr-Leu-|-Tyr-Trp, in which cleavage of the -Tyr-|-Leu- and -Tyr-|-Trp bonds also occurs).</text>
        <dbReference type="EC" id="3.4.21.92"/>
    </reaction>
</comment>
<comment type="subunit">
    <text>Component of the chloroplastic Clp protease core complex.</text>
</comment>
<comment type="subcellular location">
    <subcellularLocation>
        <location evidence="1">Plastid</location>
        <location evidence="1">Chloroplast stroma</location>
    </subcellularLocation>
</comment>
<comment type="similarity">
    <text evidence="1">Belongs to the peptidase S14 family.</text>
</comment>
<geneLocation type="chloroplast"/>
<sequence length="198" mass="22424">MPIGVPKVLFRNPGDPISSWVDVYNRLYRERLLFLGQGISTDLSNQLIGLMMYLSMEDENKELYLFVNSPGGWVIPGIAIYDTMQFVRPDIHTICIGLAASMGSFILAGGQLTKRIAFPHARVMIHEPYSAFYMAQVGEFVMEAVELMKLRETLTRVYAERTGKPFWVVHEDMERDIFMSATEAQAYGIVDFVAVQGK</sequence>
<feature type="chain" id="PRO_0000275303" description="ATP-dependent Clp protease proteolytic subunit">
    <location>
        <begin position="1"/>
        <end position="198"/>
    </location>
</feature>
<feature type="active site" description="Nucleophile" evidence="1">
    <location>
        <position position="101"/>
    </location>
</feature>
<feature type="active site" evidence="1">
    <location>
        <position position="126"/>
    </location>
</feature>
<keyword id="KW-0150">Chloroplast</keyword>
<keyword id="KW-0378">Hydrolase</keyword>
<keyword id="KW-0934">Plastid</keyword>
<keyword id="KW-0645">Protease</keyword>
<keyword id="KW-1185">Reference proteome</keyword>
<keyword id="KW-0720">Serine protease</keyword>
<dbReference type="EC" id="3.4.21.92" evidence="1"/>
<dbReference type="EMBL" id="DQ231562">
    <property type="status" value="NOT_ANNOTATED_CDS"/>
    <property type="molecule type" value="Genomic_DNA"/>
</dbReference>
<dbReference type="EMBL" id="DQ386163">
    <property type="protein sequence ID" value="ABD47081.1"/>
    <property type="molecule type" value="Genomic_DNA"/>
</dbReference>
<dbReference type="RefSeq" id="YP_635664.1">
    <property type="nucleotide sequence ID" value="NC_008096.2"/>
</dbReference>
<dbReference type="SMR" id="Q27S24"/>
<dbReference type="FunCoup" id="Q27S24">
    <property type="interactions" value="7"/>
</dbReference>
<dbReference type="STRING" id="4113.Q27S24"/>
<dbReference type="MEROPS" id="S14.002"/>
<dbReference type="PaxDb" id="4113-PGSC0003DMT400013567"/>
<dbReference type="GeneID" id="4099934"/>
<dbReference type="KEGG" id="sot:4099934"/>
<dbReference type="eggNOG" id="KOG0840">
    <property type="taxonomic scope" value="Eukaryota"/>
</dbReference>
<dbReference type="InParanoid" id="Q27S24"/>
<dbReference type="OrthoDB" id="1882605at2759"/>
<dbReference type="Proteomes" id="UP000011115">
    <property type="component" value="Unassembled WGS sequence"/>
</dbReference>
<dbReference type="ExpressionAtlas" id="Q27S24">
    <property type="expression patterns" value="baseline"/>
</dbReference>
<dbReference type="GO" id="GO:0009570">
    <property type="term" value="C:chloroplast stroma"/>
    <property type="evidence" value="ECO:0007669"/>
    <property type="project" value="UniProtKB-SubCell"/>
</dbReference>
<dbReference type="GO" id="GO:0009368">
    <property type="term" value="C:endopeptidase Clp complex"/>
    <property type="evidence" value="ECO:0000318"/>
    <property type="project" value="GO_Central"/>
</dbReference>
<dbReference type="GO" id="GO:0004176">
    <property type="term" value="F:ATP-dependent peptidase activity"/>
    <property type="evidence" value="ECO:0000318"/>
    <property type="project" value="GO_Central"/>
</dbReference>
<dbReference type="GO" id="GO:0051117">
    <property type="term" value="F:ATPase binding"/>
    <property type="evidence" value="ECO:0000318"/>
    <property type="project" value="GO_Central"/>
</dbReference>
<dbReference type="GO" id="GO:0004252">
    <property type="term" value="F:serine-type endopeptidase activity"/>
    <property type="evidence" value="ECO:0000318"/>
    <property type="project" value="GO_Central"/>
</dbReference>
<dbReference type="GO" id="GO:0006515">
    <property type="term" value="P:protein quality control for misfolded or incompletely synthesized proteins"/>
    <property type="evidence" value="ECO:0000318"/>
    <property type="project" value="GO_Central"/>
</dbReference>
<dbReference type="CDD" id="cd07017">
    <property type="entry name" value="S14_ClpP_2"/>
    <property type="match status" value="1"/>
</dbReference>
<dbReference type="FunFam" id="3.90.226.10:FF:000006">
    <property type="entry name" value="ATP-dependent Clp protease proteolytic subunit"/>
    <property type="match status" value="1"/>
</dbReference>
<dbReference type="Gene3D" id="3.90.226.10">
    <property type="entry name" value="2-enoyl-CoA Hydratase, Chain A, domain 1"/>
    <property type="match status" value="1"/>
</dbReference>
<dbReference type="HAMAP" id="MF_00444">
    <property type="entry name" value="ClpP"/>
    <property type="match status" value="1"/>
</dbReference>
<dbReference type="InterPro" id="IPR001907">
    <property type="entry name" value="ClpP"/>
</dbReference>
<dbReference type="InterPro" id="IPR029045">
    <property type="entry name" value="ClpP/crotonase-like_dom_sf"/>
</dbReference>
<dbReference type="InterPro" id="IPR023562">
    <property type="entry name" value="ClpP/TepA"/>
</dbReference>
<dbReference type="InterPro" id="IPR018215">
    <property type="entry name" value="ClpP_Ser_AS"/>
</dbReference>
<dbReference type="PANTHER" id="PTHR10381">
    <property type="entry name" value="ATP-DEPENDENT CLP PROTEASE PROTEOLYTIC SUBUNIT"/>
    <property type="match status" value="1"/>
</dbReference>
<dbReference type="PANTHER" id="PTHR10381:SF15">
    <property type="entry name" value="CHLOROPLASTIC ATP-DEPENDENT CLP PROTEASE PROTEOLYTIC SUBUNIT 1"/>
    <property type="match status" value="1"/>
</dbReference>
<dbReference type="Pfam" id="PF00574">
    <property type="entry name" value="CLP_protease"/>
    <property type="match status" value="1"/>
</dbReference>
<dbReference type="PRINTS" id="PR00127">
    <property type="entry name" value="CLPPROTEASEP"/>
</dbReference>
<dbReference type="SUPFAM" id="SSF52096">
    <property type="entry name" value="ClpP/crotonase"/>
    <property type="match status" value="1"/>
</dbReference>
<dbReference type="PROSITE" id="PS00381">
    <property type="entry name" value="CLP_PROTEASE_SER"/>
    <property type="match status" value="1"/>
</dbReference>
<organism>
    <name type="scientific">Solanum tuberosum</name>
    <name type="common">Potato</name>
    <dbReference type="NCBI Taxonomy" id="4113"/>
    <lineage>
        <taxon>Eukaryota</taxon>
        <taxon>Viridiplantae</taxon>
        <taxon>Streptophyta</taxon>
        <taxon>Embryophyta</taxon>
        <taxon>Tracheophyta</taxon>
        <taxon>Spermatophyta</taxon>
        <taxon>Magnoliopsida</taxon>
        <taxon>eudicotyledons</taxon>
        <taxon>Gunneridae</taxon>
        <taxon>Pentapetalae</taxon>
        <taxon>asterids</taxon>
        <taxon>lamiids</taxon>
        <taxon>Solanales</taxon>
        <taxon>Solanaceae</taxon>
        <taxon>Solanoideae</taxon>
        <taxon>Solaneae</taxon>
        <taxon>Solanum</taxon>
    </lineage>
</organism>
<name>CLPP_SOLTU</name>
<gene>
    <name evidence="1" type="primary">clpP</name>
</gene>
<proteinExistence type="inferred from homology"/>